<dbReference type="EMBL" id="AC009519">
    <property type="protein sequence ID" value="AAF19688.1"/>
    <property type="status" value="ALT_SEQ"/>
    <property type="molecule type" value="Genomic_DNA"/>
</dbReference>
<dbReference type="EMBL" id="CP002684">
    <property type="protein sequence ID" value="AEE34255.1"/>
    <property type="molecule type" value="Genomic_DNA"/>
</dbReference>
<dbReference type="EMBL" id="AK230416">
    <property type="protein sequence ID" value="BAF02214.1"/>
    <property type="molecule type" value="mRNA"/>
</dbReference>
<dbReference type="PIR" id="C96669">
    <property type="entry name" value="C96669"/>
</dbReference>
<dbReference type="RefSeq" id="NP_176639.2">
    <property type="nucleotide sequence ID" value="NM_105133.2"/>
</dbReference>
<dbReference type="SMR" id="Q0WKZ3"/>
<dbReference type="FunCoup" id="Q0WKZ3">
    <property type="interactions" value="153"/>
</dbReference>
<dbReference type="iPTMnet" id="Q0WKZ3"/>
<dbReference type="PaxDb" id="3702-AT1G64580.1"/>
<dbReference type="ProteomicsDB" id="249128"/>
<dbReference type="EnsemblPlants" id="AT1G64580.1">
    <property type="protein sequence ID" value="AT1G64580.1"/>
    <property type="gene ID" value="AT1G64580"/>
</dbReference>
<dbReference type="GeneID" id="842766"/>
<dbReference type="Gramene" id="AT1G64580.1">
    <property type="protein sequence ID" value="AT1G64580.1"/>
    <property type="gene ID" value="AT1G64580"/>
</dbReference>
<dbReference type="KEGG" id="ath:AT1G64580"/>
<dbReference type="Araport" id="AT1G64580"/>
<dbReference type="TAIR" id="AT1G64580"/>
<dbReference type="eggNOG" id="KOG4197">
    <property type="taxonomic scope" value="Eukaryota"/>
</dbReference>
<dbReference type="HOGENOM" id="CLU_002706_49_0_1"/>
<dbReference type="InParanoid" id="Q0WKZ3"/>
<dbReference type="OMA" id="CEMAREG"/>
<dbReference type="PhylomeDB" id="Q0WKZ3"/>
<dbReference type="PRO" id="PR:Q0WKZ3"/>
<dbReference type="Proteomes" id="UP000006548">
    <property type="component" value="Chromosome 1"/>
</dbReference>
<dbReference type="ExpressionAtlas" id="Q0WKZ3">
    <property type="expression patterns" value="baseline and differential"/>
</dbReference>
<dbReference type="FunFam" id="1.25.40.10:FF:000558">
    <property type="entry name" value="Pentatricopeptide repeat-containing protein At5g39710"/>
    <property type="match status" value="1"/>
</dbReference>
<dbReference type="Gene3D" id="1.25.40.10">
    <property type="entry name" value="Tetratricopeptide repeat domain"/>
    <property type="match status" value="4"/>
</dbReference>
<dbReference type="InterPro" id="IPR002885">
    <property type="entry name" value="Pentatricopeptide_rpt"/>
</dbReference>
<dbReference type="InterPro" id="IPR050667">
    <property type="entry name" value="PPR-containing_protein"/>
</dbReference>
<dbReference type="InterPro" id="IPR011990">
    <property type="entry name" value="TPR-like_helical_dom_sf"/>
</dbReference>
<dbReference type="NCBIfam" id="TIGR00756">
    <property type="entry name" value="PPR"/>
    <property type="match status" value="11"/>
</dbReference>
<dbReference type="PANTHER" id="PTHR47939">
    <property type="entry name" value="MEMBRANE-ASSOCIATED SALT-INDUCIBLE PROTEIN-LIKE"/>
    <property type="match status" value="1"/>
</dbReference>
<dbReference type="PANTHER" id="PTHR47939:SF13">
    <property type="entry name" value="OS03G0201400 PROTEIN"/>
    <property type="match status" value="1"/>
</dbReference>
<dbReference type="Pfam" id="PF01535">
    <property type="entry name" value="PPR"/>
    <property type="match status" value="1"/>
</dbReference>
<dbReference type="Pfam" id="PF13041">
    <property type="entry name" value="PPR_2"/>
    <property type="match status" value="5"/>
</dbReference>
<dbReference type="PROSITE" id="PS51375">
    <property type="entry name" value="PPR"/>
    <property type="match status" value="13"/>
</dbReference>
<keyword id="KW-1185">Reference proteome</keyword>
<keyword id="KW-0677">Repeat</keyword>
<accession>Q0WKZ3</accession>
<accession>Q9SGV7</accession>
<comment type="similarity">
    <text evidence="1">Belongs to the PPR family. P subfamily.</text>
</comment>
<comment type="sequence caution" evidence="1">
    <conflict type="erroneous gene model prediction">
        <sequence resource="EMBL-CDS" id="AAF19688"/>
    </conflict>
    <text>The predicted gene has been split into 2 genes: At1g64580 and At1g64583.</text>
</comment>
<comment type="online information" name="Pentatricopeptide repeat proteins">
    <link uri="https://ppr.plantenergy.uwa.edu.au"/>
</comment>
<gene>
    <name type="ordered locus">At1g64580</name>
    <name type="ORF">F1N19.15</name>
</gene>
<protein>
    <recommendedName>
        <fullName>Pentatricopeptide repeat-containing protein At1g64580</fullName>
    </recommendedName>
</protein>
<reference key="1">
    <citation type="journal article" date="2000" name="Nature">
        <title>Sequence and analysis of chromosome 1 of the plant Arabidopsis thaliana.</title>
        <authorList>
            <person name="Theologis A."/>
            <person name="Ecker J.R."/>
            <person name="Palm C.J."/>
            <person name="Federspiel N.A."/>
            <person name="Kaul S."/>
            <person name="White O."/>
            <person name="Alonso J."/>
            <person name="Altafi H."/>
            <person name="Araujo R."/>
            <person name="Bowman C.L."/>
            <person name="Brooks S.Y."/>
            <person name="Buehler E."/>
            <person name="Chan A."/>
            <person name="Chao Q."/>
            <person name="Chen H."/>
            <person name="Cheuk R.F."/>
            <person name="Chin C.W."/>
            <person name="Chung M.K."/>
            <person name="Conn L."/>
            <person name="Conway A.B."/>
            <person name="Conway A.R."/>
            <person name="Creasy T.H."/>
            <person name="Dewar K."/>
            <person name="Dunn P."/>
            <person name="Etgu P."/>
            <person name="Feldblyum T.V."/>
            <person name="Feng J.-D."/>
            <person name="Fong B."/>
            <person name="Fujii C.Y."/>
            <person name="Gill J.E."/>
            <person name="Goldsmith A.D."/>
            <person name="Haas B."/>
            <person name="Hansen N.F."/>
            <person name="Hughes B."/>
            <person name="Huizar L."/>
            <person name="Hunter J.L."/>
            <person name="Jenkins J."/>
            <person name="Johnson-Hopson C."/>
            <person name="Khan S."/>
            <person name="Khaykin E."/>
            <person name="Kim C.J."/>
            <person name="Koo H.L."/>
            <person name="Kremenetskaia I."/>
            <person name="Kurtz D.B."/>
            <person name="Kwan A."/>
            <person name="Lam B."/>
            <person name="Langin-Hooper S."/>
            <person name="Lee A."/>
            <person name="Lee J.M."/>
            <person name="Lenz C.A."/>
            <person name="Li J.H."/>
            <person name="Li Y.-P."/>
            <person name="Lin X."/>
            <person name="Liu S.X."/>
            <person name="Liu Z.A."/>
            <person name="Luros J.S."/>
            <person name="Maiti R."/>
            <person name="Marziali A."/>
            <person name="Militscher J."/>
            <person name="Miranda M."/>
            <person name="Nguyen M."/>
            <person name="Nierman W.C."/>
            <person name="Osborne B.I."/>
            <person name="Pai G."/>
            <person name="Peterson J."/>
            <person name="Pham P.K."/>
            <person name="Rizzo M."/>
            <person name="Rooney T."/>
            <person name="Rowley D."/>
            <person name="Sakano H."/>
            <person name="Salzberg S.L."/>
            <person name="Schwartz J.R."/>
            <person name="Shinn P."/>
            <person name="Southwick A.M."/>
            <person name="Sun H."/>
            <person name="Tallon L.J."/>
            <person name="Tambunga G."/>
            <person name="Toriumi M.J."/>
            <person name="Town C.D."/>
            <person name="Utterback T."/>
            <person name="Van Aken S."/>
            <person name="Vaysberg M."/>
            <person name="Vysotskaia V.S."/>
            <person name="Walker M."/>
            <person name="Wu D."/>
            <person name="Yu G."/>
            <person name="Fraser C.M."/>
            <person name="Venter J.C."/>
            <person name="Davis R.W."/>
        </authorList>
    </citation>
    <scope>NUCLEOTIDE SEQUENCE [LARGE SCALE GENOMIC DNA]</scope>
    <source>
        <strain>cv. Columbia</strain>
    </source>
</reference>
<reference key="2">
    <citation type="journal article" date="2017" name="Plant J.">
        <title>Araport11: a complete reannotation of the Arabidopsis thaliana reference genome.</title>
        <authorList>
            <person name="Cheng C.Y."/>
            <person name="Krishnakumar V."/>
            <person name="Chan A.P."/>
            <person name="Thibaud-Nissen F."/>
            <person name="Schobel S."/>
            <person name="Town C.D."/>
        </authorList>
    </citation>
    <scope>GENOME REANNOTATION</scope>
    <source>
        <strain>cv. Columbia</strain>
    </source>
</reference>
<reference key="3">
    <citation type="submission" date="2006-07" db="EMBL/GenBank/DDBJ databases">
        <title>Large-scale analysis of RIKEN Arabidopsis full-length (RAFL) cDNAs.</title>
        <authorList>
            <person name="Totoki Y."/>
            <person name="Seki M."/>
            <person name="Ishida J."/>
            <person name="Nakajima M."/>
            <person name="Enju A."/>
            <person name="Kamiya A."/>
            <person name="Narusaka M."/>
            <person name="Shin-i T."/>
            <person name="Nakagawa M."/>
            <person name="Sakamoto N."/>
            <person name="Oishi K."/>
            <person name="Kohara Y."/>
            <person name="Kobayashi M."/>
            <person name="Toyoda A."/>
            <person name="Sakaki Y."/>
            <person name="Sakurai T."/>
            <person name="Iida K."/>
            <person name="Akiyama K."/>
            <person name="Satou M."/>
            <person name="Toyoda T."/>
            <person name="Konagaya A."/>
            <person name="Carninci P."/>
            <person name="Kawai J."/>
            <person name="Hayashizaki Y."/>
            <person name="Shinozaki K."/>
        </authorList>
    </citation>
    <scope>NUCLEOTIDE SEQUENCE [LARGE SCALE MRNA]</scope>
    <source>
        <strain>cv. Columbia</strain>
    </source>
</reference>
<reference key="4">
    <citation type="journal article" date="2004" name="Plant Cell">
        <title>Genome-wide analysis of Arabidopsis pentatricopeptide repeat proteins reveals their essential role in organelle biogenesis.</title>
        <authorList>
            <person name="Lurin C."/>
            <person name="Andres C."/>
            <person name="Aubourg S."/>
            <person name="Bellaoui M."/>
            <person name="Bitton F."/>
            <person name="Bruyere C."/>
            <person name="Caboche M."/>
            <person name="Debast C."/>
            <person name="Gualberto J."/>
            <person name="Hoffmann B."/>
            <person name="Lecharny A."/>
            <person name="Le Ret M."/>
            <person name="Martin-Magniette M.-L."/>
            <person name="Mireau H."/>
            <person name="Peeters N."/>
            <person name="Renou J.-P."/>
            <person name="Szurek B."/>
            <person name="Taconnat L."/>
            <person name="Small I."/>
        </authorList>
    </citation>
    <scope>GENE FAMILY</scope>
</reference>
<organism>
    <name type="scientific">Arabidopsis thaliana</name>
    <name type="common">Mouse-ear cress</name>
    <dbReference type="NCBI Taxonomy" id="3702"/>
    <lineage>
        <taxon>Eukaryota</taxon>
        <taxon>Viridiplantae</taxon>
        <taxon>Streptophyta</taxon>
        <taxon>Embryophyta</taxon>
        <taxon>Tracheophyta</taxon>
        <taxon>Spermatophyta</taxon>
        <taxon>Magnoliopsida</taxon>
        <taxon>eudicotyledons</taxon>
        <taxon>Gunneridae</taxon>
        <taxon>Pentapetalae</taxon>
        <taxon>rosids</taxon>
        <taxon>malvids</taxon>
        <taxon>Brassicales</taxon>
        <taxon>Brassicaceae</taxon>
        <taxon>Camelineae</taxon>
        <taxon>Arabidopsis</taxon>
    </lineage>
</organism>
<sequence>MQRLIPIAFSSSVKGFVRRHYLLLERGNNPETSLSRSFSGASHHHHYRERLRNELHCIKFDDAFSLFCEMLQSRPIPSIVDFTRVLTVIAKMNKFDIVIYLYHKMENLGISHDLYSFTILIHCFCRCSRLSLALALLGKMMKLGFRPSIVTLGSLLNGFCQGNRFQEAVSLVDSMDGFGFVPNVVIYNTVINGLCKNRDLNNALEVFYCMEKKGIRADAVTYNTLISGLSNSGRWTDAARLLRDMVKRKIDPNVIFFTALIDTFVKEGNLLEARNLYKEMIRRSVVPNVFTYNSLINGFCIHGCLGDAKYMFDLMVSKGCFPDVVTYNTLITGFCKSKRVEDGMKLFCEMTYQGLVGDAFTYNTLIHGYCQAGKLNVAQKVFNRMVDCGVSPDIVTYNILLDCLCNNGKIEKALVMVEDLQKSEMDVDIITYNIIIQGLCRTDKLKEAWCLFRSLTRKGVKPDAIAYITMISGLCRKGLQREADKLCRRMKEDGFMPSERIYDETLRDHYTSLSAELIKAAHE</sequence>
<evidence type="ECO:0000305" key="1"/>
<name>PP105_ARATH</name>
<proteinExistence type="evidence at transcript level"/>
<feature type="chain" id="PRO_0000342846" description="Pentatricopeptide repeat-containing protein At1g64580">
    <location>
        <begin position="1"/>
        <end position="523"/>
    </location>
</feature>
<feature type="repeat" description="PPR 1">
    <location>
        <begin position="43"/>
        <end position="77"/>
    </location>
</feature>
<feature type="repeat" description="PPR 2">
    <location>
        <begin position="78"/>
        <end position="112"/>
    </location>
</feature>
<feature type="repeat" description="PPR 3">
    <location>
        <begin position="113"/>
        <end position="147"/>
    </location>
</feature>
<feature type="repeat" description="PPR 4">
    <location>
        <begin position="148"/>
        <end position="182"/>
    </location>
</feature>
<feature type="repeat" description="PPR 5">
    <location>
        <begin position="183"/>
        <end position="217"/>
    </location>
</feature>
<feature type="repeat" description="PPR 6">
    <location>
        <begin position="218"/>
        <end position="252"/>
    </location>
</feature>
<feature type="repeat" description="PPR 7">
    <location>
        <begin position="253"/>
        <end position="287"/>
    </location>
</feature>
<feature type="repeat" description="PPR 8">
    <location>
        <begin position="288"/>
        <end position="322"/>
    </location>
</feature>
<feature type="repeat" description="PPR 9">
    <location>
        <begin position="323"/>
        <end position="357"/>
    </location>
</feature>
<feature type="repeat" description="PPR 10">
    <location>
        <begin position="358"/>
        <end position="392"/>
    </location>
</feature>
<feature type="repeat" description="PPR 11">
    <location>
        <begin position="393"/>
        <end position="427"/>
    </location>
</feature>
<feature type="repeat" description="PPR 12">
    <location>
        <begin position="428"/>
        <end position="462"/>
    </location>
</feature>
<feature type="repeat" description="PPR 13">
    <location>
        <begin position="463"/>
        <end position="497"/>
    </location>
</feature>